<sequence>MRHFLTLRDCSVDEIHQLLRRATELRDMHRAGHLHQPLQGRVLGMVFEKSSTRTRVSFEAGMAQLGGHALFLSPRDTQLGRGEPVEDTARVVSRMVDAVMIRTFGHDMLERFAGHSAAPVINGLSDLCHPCQLLADLQTFTEHRGPITDRRVAWIGDGNNMCHSWIEAAGLLGFDLHIAAPPGYRPEADILALGGDRVQVFDDAYAAAEGADLVTTDVWASMGQESEQAAREEAFRGFCVTESLMECAGEQALFMHCLPAHRGEEVEAAVLEGPQSVVWDEAENRLHAQKALLEFLMLGY</sequence>
<name>OTC_HALHL</name>
<gene>
    <name evidence="2" type="primary">argF</name>
    <name type="ordered locus">Hhal_0726</name>
</gene>
<organism>
    <name type="scientific">Halorhodospira halophila (strain DSM 244 / SL1)</name>
    <name type="common">Ectothiorhodospira halophila (strain DSM 244 / SL1)</name>
    <dbReference type="NCBI Taxonomy" id="349124"/>
    <lineage>
        <taxon>Bacteria</taxon>
        <taxon>Pseudomonadati</taxon>
        <taxon>Pseudomonadota</taxon>
        <taxon>Gammaproteobacteria</taxon>
        <taxon>Chromatiales</taxon>
        <taxon>Ectothiorhodospiraceae</taxon>
        <taxon>Halorhodospira</taxon>
    </lineage>
</organism>
<accession>A1WUZ6</accession>
<feature type="chain" id="PRO_1000163972" description="Ornithine carbamoyltransferase">
    <location>
        <begin position="1"/>
        <end position="300"/>
    </location>
</feature>
<feature type="binding site" evidence="2">
    <location>
        <begin position="51"/>
        <end position="54"/>
    </location>
    <ligand>
        <name>carbamoyl phosphate</name>
        <dbReference type="ChEBI" id="CHEBI:58228"/>
    </ligand>
</feature>
<feature type="binding site" evidence="2">
    <location>
        <position position="78"/>
    </location>
    <ligand>
        <name>carbamoyl phosphate</name>
        <dbReference type="ChEBI" id="CHEBI:58228"/>
    </ligand>
</feature>
<feature type="binding site" evidence="2">
    <location>
        <position position="102"/>
    </location>
    <ligand>
        <name>carbamoyl phosphate</name>
        <dbReference type="ChEBI" id="CHEBI:58228"/>
    </ligand>
</feature>
<feature type="binding site" evidence="2">
    <location>
        <begin position="129"/>
        <end position="132"/>
    </location>
    <ligand>
        <name>carbamoyl phosphate</name>
        <dbReference type="ChEBI" id="CHEBI:58228"/>
    </ligand>
</feature>
<feature type="binding site" evidence="2">
    <location>
        <position position="160"/>
    </location>
    <ligand>
        <name>L-ornithine</name>
        <dbReference type="ChEBI" id="CHEBI:46911"/>
    </ligand>
</feature>
<feature type="binding site" evidence="2">
    <location>
        <position position="217"/>
    </location>
    <ligand>
        <name>L-ornithine</name>
        <dbReference type="ChEBI" id="CHEBI:46911"/>
    </ligand>
</feature>
<feature type="binding site" evidence="2">
    <location>
        <begin position="221"/>
        <end position="222"/>
    </location>
    <ligand>
        <name>L-ornithine</name>
        <dbReference type="ChEBI" id="CHEBI:46911"/>
    </ligand>
</feature>
<feature type="binding site" evidence="2">
    <location>
        <begin position="257"/>
        <end position="258"/>
    </location>
    <ligand>
        <name>carbamoyl phosphate</name>
        <dbReference type="ChEBI" id="CHEBI:58228"/>
    </ligand>
</feature>
<feature type="binding site" evidence="2">
    <location>
        <position position="285"/>
    </location>
    <ligand>
        <name>carbamoyl phosphate</name>
        <dbReference type="ChEBI" id="CHEBI:58228"/>
    </ligand>
</feature>
<dbReference type="EC" id="2.1.3.3" evidence="2"/>
<dbReference type="EMBL" id="CP000544">
    <property type="protein sequence ID" value="ABM61508.1"/>
    <property type="molecule type" value="Genomic_DNA"/>
</dbReference>
<dbReference type="RefSeq" id="WP_011813531.1">
    <property type="nucleotide sequence ID" value="NC_008789.1"/>
</dbReference>
<dbReference type="SMR" id="A1WUZ6"/>
<dbReference type="STRING" id="349124.Hhal_0726"/>
<dbReference type="KEGG" id="hha:Hhal_0726"/>
<dbReference type="eggNOG" id="COG0078">
    <property type="taxonomic scope" value="Bacteria"/>
</dbReference>
<dbReference type="HOGENOM" id="CLU_043846_3_2_6"/>
<dbReference type="OrthoDB" id="9802587at2"/>
<dbReference type="UniPathway" id="UPA00068">
    <property type="reaction ID" value="UER00112"/>
</dbReference>
<dbReference type="Proteomes" id="UP000000647">
    <property type="component" value="Chromosome"/>
</dbReference>
<dbReference type="GO" id="GO:0005737">
    <property type="term" value="C:cytoplasm"/>
    <property type="evidence" value="ECO:0007669"/>
    <property type="project" value="UniProtKB-SubCell"/>
</dbReference>
<dbReference type="GO" id="GO:0016597">
    <property type="term" value="F:amino acid binding"/>
    <property type="evidence" value="ECO:0007669"/>
    <property type="project" value="InterPro"/>
</dbReference>
<dbReference type="GO" id="GO:0004585">
    <property type="term" value="F:ornithine carbamoyltransferase activity"/>
    <property type="evidence" value="ECO:0007669"/>
    <property type="project" value="UniProtKB-UniRule"/>
</dbReference>
<dbReference type="GO" id="GO:0042450">
    <property type="term" value="P:arginine biosynthetic process via ornithine"/>
    <property type="evidence" value="ECO:0007669"/>
    <property type="project" value="TreeGrafter"/>
</dbReference>
<dbReference type="GO" id="GO:0019240">
    <property type="term" value="P:citrulline biosynthetic process"/>
    <property type="evidence" value="ECO:0007669"/>
    <property type="project" value="TreeGrafter"/>
</dbReference>
<dbReference type="GO" id="GO:0006526">
    <property type="term" value="P:L-arginine biosynthetic process"/>
    <property type="evidence" value="ECO:0007669"/>
    <property type="project" value="UniProtKB-UniRule"/>
</dbReference>
<dbReference type="FunFam" id="3.40.50.1370:FF:000008">
    <property type="entry name" value="Ornithine carbamoyltransferase"/>
    <property type="match status" value="1"/>
</dbReference>
<dbReference type="Gene3D" id="3.40.50.1370">
    <property type="entry name" value="Aspartate/ornithine carbamoyltransferase"/>
    <property type="match status" value="2"/>
</dbReference>
<dbReference type="HAMAP" id="MF_01109">
    <property type="entry name" value="OTCase"/>
    <property type="match status" value="1"/>
</dbReference>
<dbReference type="InterPro" id="IPR006132">
    <property type="entry name" value="Asp/Orn_carbamoyltranf_P-bd"/>
</dbReference>
<dbReference type="InterPro" id="IPR006130">
    <property type="entry name" value="Asp/Orn_carbamoylTrfase"/>
</dbReference>
<dbReference type="InterPro" id="IPR036901">
    <property type="entry name" value="Asp/Orn_carbamoylTrfase_sf"/>
</dbReference>
<dbReference type="InterPro" id="IPR006131">
    <property type="entry name" value="Asp_carbamoyltransf_Asp/Orn-bd"/>
</dbReference>
<dbReference type="InterPro" id="IPR002292">
    <property type="entry name" value="Orn/put_carbamltrans"/>
</dbReference>
<dbReference type="InterPro" id="IPR024904">
    <property type="entry name" value="OTCase_ArgI"/>
</dbReference>
<dbReference type="NCBIfam" id="TIGR00658">
    <property type="entry name" value="orni_carb_tr"/>
    <property type="match status" value="1"/>
</dbReference>
<dbReference type="NCBIfam" id="NF001986">
    <property type="entry name" value="PRK00779.1"/>
    <property type="match status" value="1"/>
</dbReference>
<dbReference type="PANTHER" id="PTHR45753">
    <property type="entry name" value="ORNITHINE CARBAMOYLTRANSFERASE, MITOCHONDRIAL"/>
    <property type="match status" value="1"/>
</dbReference>
<dbReference type="PANTHER" id="PTHR45753:SF3">
    <property type="entry name" value="ORNITHINE TRANSCARBAMYLASE, MITOCHONDRIAL"/>
    <property type="match status" value="1"/>
</dbReference>
<dbReference type="Pfam" id="PF00185">
    <property type="entry name" value="OTCace"/>
    <property type="match status" value="1"/>
</dbReference>
<dbReference type="Pfam" id="PF02729">
    <property type="entry name" value="OTCace_N"/>
    <property type="match status" value="1"/>
</dbReference>
<dbReference type="PRINTS" id="PR00100">
    <property type="entry name" value="AOTCASE"/>
</dbReference>
<dbReference type="PRINTS" id="PR00102">
    <property type="entry name" value="OTCASE"/>
</dbReference>
<dbReference type="SUPFAM" id="SSF53671">
    <property type="entry name" value="Aspartate/ornithine carbamoyltransferase"/>
    <property type="match status" value="1"/>
</dbReference>
<dbReference type="PROSITE" id="PS00097">
    <property type="entry name" value="CARBAMOYLTRANSFERASE"/>
    <property type="match status" value="1"/>
</dbReference>
<keyword id="KW-0028">Amino-acid biosynthesis</keyword>
<keyword id="KW-0055">Arginine biosynthesis</keyword>
<keyword id="KW-0963">Cytoplasm</keyword>
<keyword id="KW-1185">Reference proteome</keyword>
<keyword id="KW-0808">Transferase</keyword>
<evidence type="ECO:0000250" key="1"/>
<evidence type="ECO:0000255" key="2">
    <source>
        <dbReference type="HAMAP-Rule" id="MF_01109"/>
    </source>
</evidence>
<protein>
    <recommendedName>
        <fullName evidence="2">Ornithine carbamoyltransferase</fullName>
        <shortName evidence="2">OTCase</shortName>
        <ecNumber evidence="2">2.1.3.3</ecNumber>
    </recommendedName>
</protein>
<proteinExistence type="inferred from homology"/>
<reference key="1">
    <citation type="submission" date="2006-12" db="EMBL/GenBank/DDBJ databases">
        <title>Complete sequence of Halorhodospira halophila SL1.</title>
        <authorList>
            <consortium name="US DOE Joint Genome Institute"/>
            <person name="Copeland A."/>
            <person name="Lucas S."/>
            <person name="Lapidus A."/>
            <person name="Barry K."/>
            <person name="Detter J.C."/>
            <person name="Glavina del Rio T."/>
            <person name="Hammon N."/>
            <person name="Israni S."/>
            <person name="Dalin E."/>
            <person name="Tice H."/>
            <person name="Pitluck S."/>
            <person name="Saunders E."/>
            <person name="Brettin T."/>
            <person name="Bruce D."/>
            <person name="Han C."/>
            <person name="Tapia R."/>
            <person name="Schmutz J."/>
            <person name="Larimer F."/>
            <person name="Land M."/>
            <person name="Hauser L."/>
            <person name="Kyrpides N."/>
            <person name="Mikhailova N."/>
            <person name="Hoff W."/>
            <person name="Richardson P."/>
        </authorList>
    </citation>
    <scope>NUCLEOTIDE SEQUENCE [LARGE SCALE GENOMIC DNA]</scope>
    <source>
        <strain>DSM 244 / SL1</strain>
    </source>
</reference>
<comment type="function">
    <text evidence="1">Reversibly catalyzes the transfer of the carbamoyl group from carbamoyl phosphate (CP) to the N(epsilon) atom of ornithine (ORN) to produce L-citrulline.</text>
</comment>
<comment type="catalytic activity">
    <reaction evidence="2">
        <text>carbamoyl phosphate + L-ornithine = L-citrulline + phosphate + H(+)</text>
        <dbReference type="Rhea" id="RHEA:19513"/>
        <dbReference type="ChEBI" id="CHEBI:15378"/>
        <dbReference type="ChEBI" id="CHEBI:43474"/>
        <dbReference type="ChEBI" id="CHEBI:46911"/>
        <dbReference type="ChEBI" id="CHEBI:57743"/>
        <dbReference type="ChEBI" id="CHEBI:58228"/>
        <dbReference type="EC" id="2.1.3.3"/>
    </reaction>
</comment>
<comment type="pathway">
    <text evidence="2">Amino-acid biosynthesis; L-arginine biosynthesis; L-arginine from L-ornithine and carbamoyl phosphate: step 1/3.</text>
</comment>
<comment type="subcellular location">
    <subcellularLocation>
        <location evidence="2">Cytoplasm</location>
    </subcellularLocation>
</comment>
<comment type="similarity">
    <text evidence="2">Belongs to the aspartate/ornithine carbamoyltransferase superfamily. OTCase family.</text>
</comment>